<gene>
    <name evidence="1" type="primary">accD</name>
    <name type="ordered locus">Pmen_2715</name>
</gene>
<keyword id="KW-0067">ATP-binding</keyword>
<keyword id="KW-0963">Cytoplasm</keyword>
<keyword id="KW-0275">Fatty acid biosynthesis</keyword>
<keyword id="KW-0276">Fatty acid metabolism</keyword>
<keyword id="KW-0444">Lipid biosynthesis</keyword>
<keyword id="KW-0443">Lipid metabolism</keyword>
<keyword id="KW-0479">Metal-binding</keyword>
<keyword id="KW-0547">Nucleotide-binding</keyword>
<keyword id="KW-0808">Transferase</keyword>
<keyword id="KW-0862">Zinc</keyword>
<keyword id="KW-0863">Zinc-finger</keyword>
<comment type="function">
    <text evidence="1">Component of the acetyl coenzyme A carboxylase (ACC) complex. Biotin carboxylase (BC) catalyzes the carboxylation of biotin on its carrier protein (BCCP) and then the CO(2) group is transferred by the transcarboxylase to acetyl-CoA to form malonyl-CoA.</text>
</comment>
<comment type="catalytic activity">
    <reaction evidence="1">
        <text>N(6)-carboxybiotinyl-L-lysyl-[protein] + acetyl-CoA = N(6)-biotinyl-L-lysyl-[protein] + malonyl-CoA</text>
        <dbReference type="Rhea" id="RHEA:54728"/>
        <dbReference type="Rhea" id="RHEA-COMP:10505"/>
        <dbReference type="Rhea" id="RHEA-COMP:10506"/>
        <dbReference type="ChEBI" id="CHEBI:57288"/>
        <dbReference type="ChEBI" id="CHEBI:57384"/>
        <dbReference type="ChEBI" id="CHEBI:83144"/>
        <dbReference type="ChEBI" id="CHEBI:83145"/>
        <dbReference type="EC" id="2.1.3.15"/>
    </reaction>
</comment>
<comment type="cofactor">
    <cofactor evidence="1">
        <name>Zn(2+)</name>
        <dbReference type="ChEBI" id="CHEBI:29105"/>
    </cofactor>
    <text evidence="1">Binds 1 zinc ion per subunit.</text>
</comment>
<comment type="pathway">
    <text evidence="1">Lipid metabolism; malonyl-CoA biosynthesis; malonyl-CoA from acetyl-CoA: step 1/1.</text>
</comment>
<comment type="subunit">
    <text evidence="1">Acetyl-CoA carboxylase is a heterohexamer composed of biotin carboxyl carrier protein (AccB), biotin carboxylase (AccC) and two subunits each of ACCase subunit alpha (AccA) and ACCase subunit beta (AccD).</text>
</comment>
<comment type="subcellular location">
    <subcellularLocation>
        <location evidence="1">Cytoplasm</location>
    </subcellularLocation>
</comment>
<comment type="similarity">
    <text evidence="1">Belongs to the AccD/PCCB family.</text>
</comment>
<proteinExistence type="inferred from homology"/>
<protein>
    <recommendedName>
        <fullName evidence="1">Acetyl-coenzyme A carboxylase carboxyl transferase subunit beta</fullName>
        <shortName evidence="1">ACCase subunit beta</shortName>
        <shortName evidence="1">Acetyl-CoA carboxylase carboxyltransferase subunit beta</shortName>
        <ecNumber evidence="1">2.1.3.15</ecNumber>
    </recommendedName>
</protein>
<sequence>MSNWLVDKLIPSIMRSEVKKSSVPEGLWHKCPSCDAVLYRPELEKTLDVCPKCNHHMRIGARARLDIFLDQDGREEIGADLEPVDRLKFRDSKKYKDRLAAAQKQTGEKDALIAMSGTLEGMPIAVCAFEFSFMGGSMGAIVGERFVQAANVALEQRCPLVCFSASGGARMQEALISLMQMAKTSAALARLREEGLPFISVLTDPVYGGVSASLAMLGDVIVAEPKALIGFAGPRVIEQTVREKLPEGFQRSEFLLEHGAIDMIIPRNELRPRLARLLAQLMNRPSPVALPVTA</sequence>
<name>ACCD_ECTM1</name>
<feature type="chain" id="PRO_0000359039" description="Acetyl-coenzyme A carboxylase carboxyl transferase subunit beta">
    <location>
        <begin position="1"/>
        <end position="294"/>
    </location>
</feature>
<feature type="domain" description="CoA carboxyltransferase N-terminal" evidence="2">
    <location>
        <begin position="27"/>
        <end position="294"/>
    </location>
</feature>
<feature type="zinc finger region" description="C4-type" evidence="1">
    <location>
        <begin position="31"/>
        <end position="53"/>
    </location>
</feature>
<feature type="binding site" evidence="1">
    <location>
        <position position="31"/>
    </location>
    <ligand>
        <name>Zn(2+)</name>
        <dbReference type="ChEBI" id="CHEBI:29105"/>
    </ligand>
</feature>
<feature type="binding site" evidence="1">
    <location>
        <position position="34"/>
    </location>
    <ligand>
        <name>Zn(2+)</name>
        <dbReference type="ChEBI" id="CHEBI:29105"/>
    </ligand>
</feature>
<feature type="binding site" evidence="1">
    <location>
        <position position="50"/>
    </location>
    <ligand>
        <name>Zn(2+)</name>
        <dbReference type="ChEBI" id="CHEBI:29105"/>
    </ligand>
</feature>
<feature type="binding site" evidence="1">
    <location>
        <position position="53"/>
    </location>
    <ligand>
        <name>Zn(2+)</name>
        <dbReference type="ChEBI" id="CHEBI:29105"/>
    </ligand>
</feature>
<evidence type="ECO:0000255" key="1">
    <source>
        <dbReference type="HAMAP-Rule" id="MF_01395"/>
    </source>
</evidence>
<evidence type="ECO:0000255" key="2">
    <source>
        <dbReference type="PROSITE-ProRule" id="PRU01136"/>
    </source>
</evidence>
<reference key="1">
    <citation type="submission" date="2007-04" db="EMBL/GenBank/DDBJ databases">
        <title>Complete sequence of Pseudomonas mendocina ymp.</title>
        <authorList>
            <consortium name="US DOE Joint Genome Institute"/>
            <person name="Copeland A."/>
            <person name="Lucas S."/>
            <person name="Lapidus A."/>
            <person name="Barry K."/>
            <person name="Glavina del Rio T."/>
            <person name="Dalin E."/>
            <person name="Tice H."/>
            <person name="Pitluck S."/>
            <person name="Kiss H."/>
            <person name="Brettin T."/>
            <person name="Detter J.C."/>
            <person name="Bruce D."/>
            <person name="Han C."/>
            <person name="Schmutz J."/>
            <person name="Larimer F."/>
            <person name="Land M."/>
            <person name="Hauser L."/>
            <person name="Kyrpides N."/>
            <person name="Mikhailova N."/>
            <person name="Hersman L."/>
            <person name="Dubois J."/>
            <person name="Maurice P."/>
            <person name="Richardson P."/>
        </authorList>
    </citation>
    <scope>NUCLEOTIDE SEQUENCE [LARGE SCALE GENOMIC DNA]</scope>
    <source>
        <strain>ymp</strain>
    </source>
</reference>
<organism>
    <name type="scientific">Ectopseudomonas mendocina (strain ymp)</name>
    <name type="common">Pseudomonas mendocina</name>
    <dbReference type="NCBI Taxonomy" id="399739"/>
    <lineage>
        <taxon>Bacteria</taxon>
        <taxon>Pseudomonadati</taxon>
        <taxon>Pseudomonadota</taxon>
        <taxon>Gammaproteobacteria</taxon>
        <taxon>Pseudomonadales</taxon>
        <taxon>Pseudomonadaceae</taxon>
        <taxon>Ectopseudomonas</taxon>
    </lineage>
</organism>
<accession>A4XVV4</accession>
<dbReference type="EC" id="2.1.3.15" evidence="1"/>
<dbReference type="EMBL" id="CP000680">
    <property type="protein sequence ID" value="ABP85470.1"/>
    <property type="molecule type" value="Genomic_DNA"/>
</dbReference>
<dbReference type="SMR" id="A4XVV4"/>
<dbReference type="STRING" id="399739.Pmen_2715"/>
<dbReference type="KEGG" id="pmy:Pmen_2715"/>
<dbReference type="PATRIC" id="fig|399739.8.peg.2744"/>
<dbReference type="eggNOG" id="COG0777">
    <property type="taxonomic scope" value="Bacteria"/>
</dbReference>
<dbReference type="HOGENOM" id="CLU_015486_1_0_6"/>
<dbReference type="OrthoDB" id="9772975at2"/>
<dbReference type="UniPathway" id="UPA00655">
    <property type="reaction ID" value="UER00711"/>
</dbReference>
<dbReference type="GO" id="GO:0009329">
    <property type="term" value="C:acetate CoA-transferase complex"/>
    <property type="evidence" value="ECO:0007669"/>
    <property type="project" value="TreeGrafter"/>
</dbReference>
<dbReference type="GO" id="GO:0003989">
    <property type="term" value="F:acetyl-CoA carboxylase activity"/>
    <property type="evidence" value="ECO:0007669"/>
    <property type="project" value="InterPro"/>
</dbReference>
<dbReference type="GO" id="GO:0005524">
    <property type="term" value="F:ATP binding"/>
    <property type="evidence" value="ECO:0007669"/>
    <property type="project" value="UniProtKB-KW"/>
</dbReference>
<dbReference type="GO" id="GO:0016743">
    <property type="term" value="F:carboxyl- or carbamoyltransferase activity"/>
    <property type="evidence" value="ECO:0007669"/>
    <property type="project" value="UniProtKB-UniRule"/>
</dbReference>
<dbReference type="GO" id="GO:0008270">
    <property type="term" value="F:zinc ion binding"/>
    <property type="evidence" value="ECO:0007669"/>
    <property type="project" value="UniProtKB-UniRule"/>
</dbReference>
<dbReference type="GO" id="GO:0006633">
    <property type="term" value="P:fatty acid biosynthetic process"/>
    <property type="evidence" value="ECO:0007669"/>
    <property type="project" value="UniProtKB-KW"/>
</dbReference>
<dbReference type="GO" id="GO:2001295">
    <property type="term" value="P:malonyl-CoA biosynthetic process"/>
    <property type="evidence" value="ECO:0007669"/>
    <property type="project" value="UniProtKB-UniRule"/>
</dbReference>
<dbReference type="Gene3D" id="3.90.226.10">
    <property type="entry name" value="2-enoyl-CoA Hydratase, Chain A, domain 1"/>
    <property type="match status" value="1"/>
</dbReference>
<dbReference type="HAMAP" id="MF_01395">
    <property type="entry name" value="AcetylCoA_CT_beta"/>
    <property type="match status" value="1"/>
</dbReference>
<dbReference type="InterPro" id="IPR034733">
    <property type="entry name" value="AcCoA_carboxyl_beta"/>
</dbReference>
<dbReference type="InterPro" id="IPR000438">
    <property type="entry name" value="Acetyl_CoA_COase_Trfase_b_su"/>
</dbReference>
<dbReference type="InterPro" id="IPR029045">
    <property type="entry name" value="ClpP/crotonase-like_dom_sf"/>
</dbReference>
<dbReference type="InterPro" id="IPR011762">
    <property type="entry name" value="COA_CT_N"/>
</dbReference>
<dbReference type="InterPro" id="IPR041010">
    <property type="entry name" value="Znf-ACC"/>
</dbReference>
<dbReference type="NCBIfam" id="TIGR00515">
    <property type="entry name" value="accD"/>
    <property type="match status" value="1"/>
</dbReference>
<dbReference type="PANTHER" id="PTHR42995">
    <property type="entry name" value="ACETYL-COENZYME A CARBOXYLASE CARBOXYL TRANSFERASE SUBUNIT BETA, CHLOROPLASTIC"/>
    <property type="match status" value="1"/>
</dbReference>
<dbReference type="PANTHER" id="PTHR42995:SF5">
    <property type="entry name" value="ACETYL-COENZYME A CARBOXYLASE CARBOXYL TRANSFERASE SUBUNIT BETA, CHLOROPLASTIC"/>
    <property type="match status" value="1"/>
</dbReference>
<dbReference type="Pfam" id="PF01039">
    <property type="entry name" value="Carboxyl_trans"/>
    <property type="match status" value="1"/>
</dbReference>
<dbReference type="Pfam" id="PF17848">
    <property type="entry name" value="Zn_ribbon_ACC"/>
    <property type="match status" value="1"/>
</dbReference>
<dbReference type="PRINTS" id="PR01070">
    <property type="entry name" value="ACCCTRFRASEB"/>
</dbReference>
<dbReference type="SUPFAM" id="SSF52096">
    <property type="entry name" value="ClpP/crotonase"/>
    <property type="match status" value="1"/>
</dbReference>
<dbReference type="PROSITE" id="PS50980">
    <property type="entry name" value="COA_CT_NTER"/>
    <property type="match status" value="1"/>
</dbReference>